<comment type="similarity">
    <text evidence="1">Belongs to the 2H phosphoesterase superfamily. YjcG family.</text>
</comment>
<name>Y1770_STAS1</name>
<dbReference type="EC" id="3.1.-.-" evidence="1"/>
<dbReference type="EMBL" id="AP008934">
    <property type="protein sequence ID" value="BAE18915.1"/>
    <property type="molecule type" value="Genomic_DNA"/>
</dbReference>
<dbReference type="RefSeq" id="WP_002483746.1">
    <property type="nucleotide sequence ID" value="NZ_MTGA01000039.1"/>
</dbReference>
<dbReference type="SMR" id="Q49WE4"/>
<dbReference type="KEGG" id="ssp:SSP1770"/>
<dbReference type="eggNOG" id="COG1514">
    <property type="taxonomic scope" value="Bacteria"/>
</dbReference>
<dbReference type="HOGENOM" id="CLU_132020_0_0_9"/>
<dbReference type="OrthoDB" id="1524661at2"/>
<dbReference type="Proteomes" id="UP000006371">
    <property type="component" value="Chromosome"/>
</dbReference>
<dbReference type="GO" id="GO:0016788">
    <property type="term" value="F:hydrolase activity, acting on ester bonds"/>
    <property type="evidence" value="ECO:0007669"/>
    <property type="project" value="UniProtKB-UniRule"/>
</dbReference>
<dbReference type="Gene3D" id="3.90.1140.10">
    <property type="entry name" value="Cyclic phosphodiesterase"/>
    <property type="match status" value="1"/>
</dbReference>
<dbReference type="HAMAP" id="MF_01444">
    <property type="entry name" value="2H_phosphoesterase_YjcG"/>
    <property type="match status" value="1"/>
</dbReference>
<dbReference type="InterPro" id="IPR050580">
    <property type="entry name" value="2H_phosphoesterase_YjcG-like"/>
</dbReference>
<dbReference type="InterPro" id="IPR009097">
    <property type="entry name" value="Cyclic_Pdiesterase"/>
</dbReference>
<dbReference type="InterPro" id="IPR022932">
    <property type="entry name" value="YjcG"/>
</dbReference>
<dbReference type="NCBIfam" id="NF010223">
    <property type="entry name" value="PRK13679.1"/>
    <property type="match status" value="1"/>
</dbReference>
<dbReference type="PANTHER" id="PTHR40037:SF1">
    <property type="entry name" value="PHOSPHOESTERASE SAOUHSC_00951-RELATED"/>
    <property type="match status" value="1"/>
</dbReference>
<dbReference type="PANTHER" id="PTHR40037">
    <property type="entry name" value="PHOSPHOESTERASE YJCG-RELATED"/>
    <property type="match status" value="1"/>
</dbReference>
<dbReference type="Pfam" id="PF13563">
    <property type="entry name" value="2_5_RNA_ligase2"/>
    <property type="match status" value="1"/>
</dbReference>
<dbReference type="SUPFAM" id="SSF55144">
    <property type="entry name" value="LigT-like"/>
    <property type="match status" value="1"/>
</dbReference>
<accession>Q49WE4</accession>
<sequence length="169" mass="19434">MILGLALIPSKAFQDEVNAYRKRYDAHYATIMPHITIKGQFKINDGDLESVKETIKSKIEGIPTIDIHATKASNFAPITNVIYFKVEKTETLERLFNQFNNGDFYGVADHTFVPHFTIAQGLTSQEFEDIYGQLKLAGIDYKETIEQLSLVYYDEKEEKWKVLENYNLA</sequence>
<reference key="1">
    <citation type="journal article" date="2005" name="Proc. Natl. Acad. Sci. U.S.A.">
        <title>Whole genome sequence of Staphylococcus saprophyticus reveals the pathogenesis of uncomplicated urinary tract infection.</title>
        <authorList>
            <person name="Kuroda M."/>
            <person name="Yamashita A."/>
            <person name="Hirakawa H."/>
            <person name="Kumano M."/>
            <person name="Morikawa K."/>
            <person name="Higashide M."/>
            <person name="Maruyama A."/>
            <person name="Inose Y."/>
            <person name="Matoba K."/>
            <person name="Toh H."/>
            <person name="Kuhara S."/>
            <person name="Hattori M."/>
            <person name="Ohta T."/>
        </authorList>
    </citation>
    <scope>NUCLEOTIDE SEQUENCE [LARGE SCALE GENOMIC DNA]</scope>
    <source>
        <strain>ATCC 15305 / DSM 20229 / NCIMB 8711 / NCTC 7292 / S-41</strain>
    </source>
</reference>
<organism>
    <name type="scientific">Staphylococcus saprophyticus subsp. saprophyticus (strain ATCC 15305 / DSM 20229 / NCIMB 8711 / NCTC 7292 / S-41)</name>
    <dbReference type="NCBI Taxonomy" id="342451"/>
    <lineage>
        <taxon>Bacteria</taxon>
        <taxon>Bacillati</taxon>
        <taxon>Bacillota</taxon>
        <taxon>Bacilli</taxon>
        <taxon>Bacillales</taxon>
        <taxon>Staphylococcaceae</taxon>
        <taxon>Staphylococcus</taxon>
    </lineage>
</organism>
<gene>
    <name type="ordered locus">SSP1770</name>
</gene>
<proteinExistence type="inferred from homology"/>
<keyword id="KW-0378">Hydrolase</keyword>
<keyword id="KW-1185">Reference proteome</keyword>
<evidence type="ECO:0000255" key="1">
    <source>
        <dbReference type="HAMAP-Rule" id="MF_01444"/>
    </source>
</evidence>
<protein>
    <recommendedName>
        <fullName evidence="1">Putative phosphoesterase SSP1770</fullName>
        <ecNumber evidence="1">3.1.-.-</ecNumber>
    </recommendedName>
</protein>
<feature type="chain" id="PRO_0000299349" description="Putative phosphoesterase SSP1770">
    <location>
        <begin position="1"/>
        <end position="169"/>
    </location>
</feature>
<feature type="short sequence motif" description="HXTX 1" evidence="1">
    <location>
        <begin position="34"/>
        <end position="37"/>
    </location>
</feature>
<feature type="short sequence motif" description="HXTX 2" evidence="1">
    <location>
        <begin position="115"/>
        <end position="118"/>
    </location>
</feature>
<feature type="active site" description="Proton donor" evidence="1">
    <location>
        <position position="34"/>
    </location>
</feature>
<feature type="active site" description="Proton acceptor" evidence="1">
    <location>
        <position position="115"/>
    </location>
</feature>